<gene>
    <name type="primary">bltp1</name>
    <name type="ORF">si:ch211-233a24.2</name>
</gene>
<feature type="chain" id="PRO_0000445068" description="Bridge-like lipid transfer protein family member 1">
    <location>
        <begin position="1"/>
        <end position="4923"/>
    </location>
</feature>
<feature type="transmembrane region" description="Helical" evidence="3">
    <location>
        <begin position="25"/>
        <end position="45"/>
    </location>
</feature>
<feature type="region of interest" description="Disordered" evidence="4">
    <location>
        <begin position="160"/>
        <end position="179"/>
    </location>
</feature>
<feature type="region of interest" description="Disordered" evidence="4">
    <location>
        <begin position="606"/>
        <end position="631"/>
    </location>
</feature>
<feature type="region of interest" description="Disordered" evidence="4">
    <location>
        <begin position="1203"/>
        <end position="1277"/>
    </location>
</feature>
<feature type="region of interest" description="Disordered" evidence="4">
    <location>
        <begin position="1300"/>
        <end position="1334"/>
    </location>
</feature>
<feature type="region of interest" description="Disordered" evidence="4">
    <location>
        <begin position="1357"/>
        <end position="1400"/>
    </location>
</feature>
<feature type="region of interest" description="Disordered" evidence="4">
    <location>
        <begin position="1471"/>
        <end position="1494"/>
    </location>
</feature>
<feature type="region of interest" description="Disordered" evidence="4">
    <location>
        <begin position="1630"/>
        <end position="1660"/>
    </location>
</feature>
<feature type="region of interest" description="Disordered" evidence="4">
    <location>
        <begin position="1878"/>
        <end position="1948"/>
    </location>
</feature>
<feature type="region of interest" description="Disordered" evidence="4">
    <location>
        <begin position="2191"/>
        <end position="2235"/>
    </location>
</feature>
<feature type="region of interest" description="Disordered" evidence="4">
    <location>
        <begin position="2262"/>
        <end position="2281"/>
    </location>
</feature>
<feature type="region of interest" description="Disordered" evidence="4">
    <location>
        <begin position="2355"/>
        <end position="2375"/>
    </location>
</feature>
<feature type="region of interest" description="Disordered" evidence="4">
    <location>
        <begin position="2550"/>
        <end position="2655"/>
    </location>
</feature>
<feature type="region of interest" description="Disordered" evidence="4">
    <location>
        <begin position="2885"/>
        <end position="2910"/>
    </location>
</feature>
<feature type="region of interest" description="Disordered" evidence="4">
    <location>
        <begin position="3564"/>
        <end position="3596"/>
    </location>
</feature>
<feature type="region of interest" description="Disordered" evidence="4">
    <location>
        <begin position="3645"/>
        <end position="3695"/>
    </location>
</feature>
<feature type="region of interest" description="Disordered" evidence="4">
    <location>
        <begin position="3739"/>
        <end position="3797"/>
    </location>
</feature>
<feature type="region of interest" description="Disordered" evidence="4">
    <location>
        <begin position="3848"/>
        <end position="3884"/>
    </location>
</feature>
<feature type="region of interest" description="Disordered" evidence="4">
    <location>
        <begin position="4017"/>
        <end position="4071"/>
    </location>
</feature>
<feature type="region of interest" description="Disordered" evidence="4">
    <location>
        <begin position="4102"/>
        <end position="4124"/>
    </location>
</feature>
<feature type="region of interest" description="Disordered" evidence="4">
    <location>
        <begin position="4249"/>
        <end position="4309"/>
    </location>
</feature>
<feature type="region of interest" description="Disordered" evidence="4">
    <location>
        <begin position="4797"/>
        <end position="4827"/>
    </location>
</feature>
<feature type="compositionally biased region" description="Low complexity" evidence="4">
    <location>
        <begin position="1210"/>
        <end position="1226"/>
    </location>
</feature>
<feature type="compositionally biased region" description="Polar residues" evidence="4">
    <location>
        <begin position="1237"/>
        <end position="1248"/>
    </location>
</feature>
<feature type="compositionally biased region" description="Low complexity" evidence="4">
    <location>
        <begin position="1260"/>
        <end position="1271"/>
    </location>
</feature>
<feature type="compositionally biased region" description="Polar residues" evidence="4">
    <location>
        <begin position="1641"/>
        <end position="1658"/>
    </location>
</feature>
<feature type="compositionally biased region" description="Low complexity" evidence="4">
    <location>
        <begin position="1887"/>
        <end position="1898"/>
    </location>
</feature>
<feature type="compositionally biased region" description="Polar residues" evidence="4">
    <location>
        <begin position="1907"/>
        <end position="1920"/>
    </location>
</feature>
<feature type="compositionally biased region" description="Acidic residues" evidence="4">
    <location>
        <begin position="1921"/>
        <end position="1931"/>
    </location>
</feature>
<feature type="compositionally biased region" description="Polar residues" evidence="4">
    <location>
        <begin position="2208"/>
        <end position="2218"/>
    </location>
</feature>
<feature type="compositionally biased region" description="Polar residues" evidence="4">
    <location>
        <begin position="2267"/>
        <end position="2281"/>
    </location>
</feature>
<feature type="compositionally biased region" description="Polar residues" evidence="4">
    <location>
        <begin position="2550"/>
        <end position="2560"/>
    </location>
</feature>
<feature type="compositionally biased region" description="Basic and acidic residues" evidence="4">
    <location>
        <begin position="2606"/>
        <end position="2624"/>
    </location>
</feature>
<feature type="compositionally biased region" description="Basic and acidic residues" evidence="4">
    <location>
        <begin position="3581"/>
        <end position="3595"/>
    </location>
</feature>
<feature type="compositionally biased region" description="Basic and acidic residues" evidence="4">
    <location>
        <begin position="3746"/>
        <end position="3770"/>
    </location>
</feature>
<feature type="compositionally biased region" description="Polar residues" evidence="4">
    <location>
        <begin position="4017"/>
        <end position="4039"/>
    </location>
</feature>
<feature type="compositionally biased region" description="Low complexity" evidence="4">
    <location>
        <begin position="4044"/>
        <end position="4056"/>
    </location>
</feature>
<feature type="compositionally biased region" description="Polar residues" evidence="4">
    <location>
        <begin position="4249"/>
        <end position="4268"/>
    </location>
</feature>
<feature type="compositionally biased region" description="Polar residues" evidence="4">
    <location>
        <begin position="4276"/>
        <end position="4286"/>
    </location>
</feature>
<feature type="compositionally biased region" description="Polar residues" evidence="4">
    <location>
        <begin position="4804"/>
        <end position="4814"/>
    </location>
</feature>
<feature type="compositionally biased region" description="Basic and acidic residues" evidence="4">
    <location>
        <begin position="4816"/>
        <end position="4827"/>
    </location>
</feature>
<accession>A0A0R4IES7</accession>
<name>BLTP1_DANRE</name>
<dbReference type="EMBL" id="CR555301">
    <property type="status" value="NOT_ANNOTATED_CDS"/>
    <property type="molecule type" value="Genomic_DNA"/>
</dbReference>
<dbReference type="EMBL" id="CT573111">
    <property type="status" value="NOT_ANNOTATED_CDS"/>
    <property type="molecule type" value="Genomic_DNA"/>
</dbReference>
<dbReference type="SMR" id="A0A0R4IES7"/>
<dbReference type="FunCoup" id="A0A0R4IES7">
    <property type="interactions" value="2229"/>
</dbReference>
<dbReference type="STRING" id="7955.ENSDARP00000133547"/>
<dbReference type="PaxDb" id="7955-ENSDARP00000120522"/>
<dbReference type="Ensembl" id="ENSDART00000164040">
    <property type="protein sequence ID" value="ENSDARP00000133547"/>
    <property type="gene ID" value="ENSDARG00000062330"/>
</dbReference>
<dbReference type="InParanoid" id="A0A0R4IES7"/>
<dbReference type="OMA" id="MRHELRH"/>
<dbReference type="Proteomes" id="UP000000437">
    <property type="component" value="Unplaced"/>
</dbReference>
<dbReference type="Bgee" id="ENSDARG00000062330">
    <property type="expression patterns" value="Expressed in caudal fin and 24 other cell types or tissues"/>
</dbReference>
<dbReference type="ExpressionAtlas" id="A0A0R4IES7">
    <property type="expression patterns" value="baseline and differential"/>
</dbReference>
<dbReference type="GO" id="GO:0005789">
    <property type="term" value="C:endoplasmic reticulum membrane"/>
    <property type="evidence" value="ECO:0007669"/>
    <property type="project" value="UniProtKB-SubCell"/>
</dbReference>
<dbReference type="GO" id="GO:0140268">
    <property type="term" value="C:endoplasmic reticulum-plasma membrane contact site"/>
    <property type="evidence" value="ECO:0000250"/>
    <property type="project" value="UniProtKB"/>
</dbReference>
<dbReference type="GO" id="GO:0031966">
    <property type="term" value="C:mitochondrial membrane"/>
    <property type="evidence" value="ECO:0007669"/>
    <property type="project" value="UniProtKB-SubCell"/>
</dbReference>
<dbReference type="GO" id="GO:0005886">
    <property type="term" value="C:plasma membrane"/>
    <property type="evidence" value="ECO:0007669"/>
    <property type="project" value="UniProtKB-SubCell"/>
</dbReference>
<dbReference type="GO" id="GO:1904121">
    <property type="term" value="F:phosphatidylethanolamine transfer activity"/>
    <property type="evidence" value="ECO:0000250"/>
    <property type="project" value="UniProtKB"/>
</dbReference>
<dbReference type="GO" id="GO:0032456">
    <property type="term" value="P:endocytic recycling"/>
    <property type="evidence" value="ECO:0000250"/>
    <property type="project" value="UniProtKB"/>
</dbReference>
<dbReference type="GO" id="GO:0016197">
    <property type="term" value="P:endosomal transport"/>
    <property type="evidence" value="ECO:0000250"/>
    <property type="project" value="UniProtKB"/>
</dbReference>
<dbReference type="GO" id="GO:0120009">
    <property type="term" value="P:intermembrane lipid transfer"/>
    <property type="evidence" value="ECO:0000250"/>
    <property type="project" value="UniProtKB"/>
</dbReference>
<dbReference type="GO" id="GO:0006909">
    <property type="term" value="P:phagocytosis"/>
    <property type="evidence" value="ECO:0000250"/>
    <property type="project" value="UniProtKB"/>
</dbReference>
<dbReference type="InterPro" id="IPR033616">
    <property type="entry name" value="BLTP1"/>
</dbReference>
<dbReference type="InterPro" id="IPR056742">
    <property type="entry name" value="BLTP1_C"/>
</dbReference>
<dbReference type="InterPro" id="IPR056741">
    <property type="entry name" value="BLTP1_M"/>
</dbReference>
<dbReference type="InterPro" id="IPR047104">
    <property type="entry name" value="BLTP1_N"/>
</dbReference>
<dbReference type="PANTHER" id="PTHR31640:SF1">
    <property type="entry name" value="BRIDGE-LIKE LIPID TRANSFER PROTEIN FAMILY MEMBER 1"/>
    <property type="match status" value="1"/>
</dbReference>
<dbReference type="PANTHER" id="PTHR31640">
    <property type="entry name" value="TRANSMEMBRANE PROTEIN KIAA1109"/>
    <property type="match status" value="1"/>
</dbReference>
<dbReference type="Pfam" id="PF25040">
    <property type="entry name" value="BLTP1_C"/>
    <property type="match status" value="1"/>
</dbReference>
<dbReference type="Pfam" id="PF25039">
    <property type="entry name" value="BLTP1_M"/>
    <property type="match status" value="1"/>
</dbReference>
<dbReference type="Pfam" id="PF20413">
    <property type="entry name" value="BLTP1_N"/>
    <property type="match status" value="1"/>
</dbReference>
<dbReference type="SMART" id="SM01220">
    <property type="entry name" value="FSA_C"/>
    <property type="match status" value="1"/>
</dbReference>
<organism>
    <name type="scientific">Danio rerio</name>
    <name type="common">Zebrafish</name>
    <name type="synonym">Brachydanio rerio</name>
    <dbReference type="NCBI Taxonomy" id="7955"/>
    <lineage>
        <taxon>Eukaryota</taxon>
        <taxon>Metazoa</taxon>
        <taxon>Chordata</taxon>
        <taxon>Craniata</taxon>
        <taxon>Vertebrata</taxon>
        <taxon>Euteleostomi</taxon>
        <taxon>Actinopterygii</taxon>
        <taxon>Neopterygii</taxon>
        <taxon>Teleostei</taxon>
        <taxon>Ostariophysi</taxon>
        <taxon>Cypriniformes</taxon>
        <taxon>Danionidae</taxon>
        <taxon>Danioninae</taxon>
        <taxon>Danio</taxon>
    </lineage>
</organism>
<sequence>MDKGNNSLPTYDEIDEYLSRRNSTFVWLLVATIMSCGWIIYLTYYNSRNIGLVLTLIINRLYKNGYIHIGSFSFSVLSGKVMFRDVYFINKDMSIRIQDGLLIFRWWKMYNPKQKQHDPKAETRLYVTVNGFEFHVYNRTDLYTRLQEIFGLEPTLIQSNRDEEKGREQRDKSLESVHIKAETQDPSSSWRSLIPVIKVNISTGRVAFGNHHLPQTLCMNFDDAFLTYATKPPSSHLDQFMHIVKGSLENVRVMLVPSPRYLGLQNDEPPRLMGEGFVVMQSNDVDIYYYQDEPGLVPEELENGDTEACSEDAKLQDLPPCWGLDIVCGKGTDFNYGPWADRQRDSLWKFFLPADYQPMKVSEVPTPGKPRQILAFELRMNIIADATIDLLFTKNRETNAVHVNVGAGSYLEVNIPMTVGENGYSPTVKGQLLHVDTTSSMQYRTLLEAEMLAFHVIASYPRVWNMPQSWQCEIEVYKATYHFIYAQKNFFTDLIQDWASDSEPDIYSFVPYSWKFKILFHQFEMIWAANQHNWIDCSTKQQENVYLAACGETLNIDFTLPFHEFVPVTCNTRFCLRAEDTDMRLCLPDCHPSRYPLLTLAKDYQHSKSPPDNNMPAEGQGAPPKNSKPRWRNMTHAEAGWVDCWSVPNFMLIIDYTWHPIYPQKSEQQLKQSLSEIEESMLSALRPPELAPPVPPPPRVSSDPSLLPPDRLHVEMELSPGSHITLYGPLLRALVSIKENYFGEDDMYTDFEESLSSPVLSTCSSSSCWTGVGLEDKSSKEAPHPLTLRPWDITVFINLHKVHGRLPTHCSSDGPEGPTGFMERLCFEMKKGYKETMLQLVLSPVHVFVSDNYQRPPIDAVLRDGHLSLSGLQMRAHAMFSAEGLPAGSDTLEYAWLIDVQAGALTGRVSVPQCASLLEWGESFVFHVMSREFQLEQPKPSVTCQHGVDRRICDAKHAGLPGHCRTSEDLKYTMTRLTVDGAHIFVVEHGCAANIKTGALRVATCNLHTAAVGEGISAVLQDVVIAQFIEQQEVARLGLPPPLLRRSHWLEAGSVTFNLITADVALAADHSAKYEVQRQFLELHDMKTKRLWFLWPEEKYKRSRNRCGCLGGCRFFGGTIGGLDFFRLEEITPSSSSAFSGISAECDMSYGQSLLHPGEWIVTKETPKIPDVIYAAKGIAVRRDTCSPAPVVDLERRVQQHLSLHVPQRSHSSASSSEENSSSSAALPLLAGERESPSPSTELMNVTTDCPIPEGPPLRSPLRSPLKRQSSVQSARLGSTKSLSAAVFVEKALPPAGVQFSSEVSRSDENVLDSPRQRRSYGSFPFTPSADSSTFHQYRSVDSSMSVADSEAYFSATEEFEPISSDEGPGTYPGRKRRRRQQGQPHTEHSRTSIYHSVEGPLSINEIRPPLLPSHTSQASFVSALGLEEEGSIETEKADPGILTTQPHLMACYQNYLAHYHVSNWAVKQPTNKRTSKSSLHRPLDLDTPTSEESSTCFDQLSIPTFKMVKAGLSASSLLDRGVQLMGDINSTPYTPLDKRAMDNTDEDTVTEDWTVDQPLAQTRTTAIVEVKGAVNVVLTPLVVEALDRYIESMVHFASFRHPASILDDLHGKVLNEVYQISKSTVSESSAAKQEHKISKTEGTTPGSLSTPHGQTDLSIKPDNVKIKGLQANVTVPKVNLCVLQASVEESSPSNKSITHVSLVALCFDRIATQLRMNRGIVEDTEKPSVMMEKFSSASKMAPQSSGSLRSNAGIEKGKEIAARLNIHRIHSQLRGLDSSDIGACAITAIPFEKSKVLFSLEEIDDFVLVDETEPSISTEHMPEHNPDHSRLGTSPEKWGWIMFECGIENLTVKGGRQSGAVLYSAFGVMGGADSGVRDGVSKSNDSSGSQTGSGYSTDVSDDNLPNDAQSPASEPNNNSDSDEQDEGVESDDLKKDLPLLPPPPDSSSMKLTIKEIWFSFAAPTNIRSHAPVMSRQLNLLSTATPAVGAWLVPIDQLKSSLEKLDMEATLRVCAVMGCIMTEALEKKSIHIPFRSKYNRVTKRARYLHENPSCLLCNILHRYLQQADYTIIEEATMNDGLPALVTLRKGLVALARQWMKFIVVTQGFKAVGLPQQLPKPKEQEPVEPEQTPGLDCGGALQSDTSADGAEFEFDAGTVSEHTMLLEGVCSRPAPTGNSAPVTGVEIMRKLSKSHTHSESALRIKGSHPYQSLSYTSGDTAADSPAHVSRTGLQCNHSPRKESLLSYLTGSIHSLHNLLEATPHRANEQTATKSSSLTRTGNSVGADVLTEHPLLSEPFSVSFYNWMSNAVGNRTGGNVQDSPLNRSQHNSLQTGGVLPTIPSASDFNTVLSSDQNTLDTHSQHSHSQHSTSQEDLLDQDETNLCPAAVQLADAQVVFKPLLSHIGIQPQDAPPLSYKMYFGEHLSFSGTLECLRADIVDSDTSKERKNKRAHRQGMVNLPPLDFKPALMIETFSLNAVVLEKCMSTPPSASALSFHELSRRPQASVHCHFTVACQAIRQHVDMALVRLIHQFSTMIDDIKATQTDIKLNRYTAGSSSPTPTKGRPYREFRSSDFSRSSRGSLNGAARLGTQKGKRGMVGPGLDTLTRSREPRGRGTLGRSERRTSKVSRKGSRDVADHMTIQMDDSDSITVSEQSEPSAECWQNMYKLLNFYSLISDPTGILEKNQDNALSEGGRSPADPPCRVVFESEEETPPSRLGRRRSLVSAEPQHVTLIVFGVGMVNRTHLEADIGGLTMEAELKKIHGSFTLKEKMKDILHQKMTETCASAHIGCVNIVLLEGISPDIQLEDFPTSPTSTAKQEFLTVVKCNIAKSQALYSAQRGLKTNNAAIFKVGAIFINIPQHPATLHSMMVRSSHQLSKQISDLIRQPSNTPPPNREDTPTPQPSEVSINQTPVEANEFPQLPEGLEKKPIVLKFSAMLDGITIGAALLPSLKAEYKMGRMKSHGMTGAQTRFTFELPNHKLCFQSKVSPVDVSAMPPTASLTLPPVTMSGQYIIQEHEGHSDTAWAPEYSSYLQGNYLRCVAEIGSFEHNLTTDLLNHLVFLQKVFMKEVNEVIQKVSGGEQPIPLWNEHDVSTDGDKPKILLYSINLTFKGIQMTATTPSMRAVRFETGWIELELSNRVQCKTTPTGSNYLKLFGKCQVDLNLALGQIVKHQVYEEAGSDFHQVAYFRTRIGLRNALQEEISGSSDKEAVLITLSRPIIFAQPVAFDRAVLFWLNYKAAYDNWKEQRLALNSDIHMATKEVVDKLPAIQQTSVQAFSTLFLQLTVNDLGICLPITSATQANYSIDFDTGSALVLTIESTLITACSSESLVSKGHFKNFCIRFAEGFETTWDDWKPEIRGDLVMNACVVPDGTYEVCSRTTGQASAESSSAGTWTLNVLWKMCGIDVHMDPNIGKRLNALGNTLTSLTGEEDNDDITDLNSVNMADLSDEDESDGMSPPVHMESVDLRRQAVMSNQIIDARGRKFSKRLVDIRELNEQAKVIDDLKKLGASEGTINQEIQRYQQLESVAVNDIRRDVRKKLRRSSMRAASLKDKWGLGYKPSYSNSRSKSISAAGRPPMKRSDRPREDLPDIKVEAASPAPRVTFNIDMFPEETEMELLSVTIDDAAHYPSCSVFSAPGTPAVFSPTVPFQPDDSRRDDLSSTSSEDTDKEDDFDRDRPQSYYRRPGGSQRKSALSALFSERWPATPPQRGGLAPPTERNIDFELDVRVEIDSGKCVLHPSTQPTEHEDLALRRSCERSSRSLDQDSPPKKRKVQPSFPSSSHLLSAKRVPTSLQSKSSDIETTVFYIPGVDVKLHYNSKTLKTESPNASRGSSLPRTLSKESKLYGMRDAPTPAPAPAASGPGKTNTLLSPPPPPLPSAKGKAGVGVKTAKLYAWVALQTLPEEMVISPCLLDFLEKALETIPITPVDRNYTTLNVHEEDVGHFDSVEPLEESQVSLVSSATSPYSSFPVDVVVYVRVQPSQIRFSCLPMSRVECMLKLPSLDLVFSSNRGELEPTSATYPSEGQHTPSSTPPSVHNANRVPGGPSTGLGSPLGRSRHHSSQSDLTGPPINSSGLSFTACMSDFSLYVFHPYGAGKQKSAVTGLPPGPGPLGSVEDEASSVTGRKDSLSINLEFVKVSLSRMRRTGCPAFIDTFIASKGGKMDTTLINISAVCDIGSASFKYDMRRLSEILAFPRAWYRRSIARRLFLGDQTINLPASGPATPDSVESIAQHLSPESSRKAYWRTWDGQTTQHPSSSVFTDTTPSHSHLKSPATGRTRSVSDSSAPRRDSVTKTSTPSFRNGKAAAQQGSPWETLVVFAINLKQLNVQMNMSNVMGNNTWTTSGLKSQGRLSVGSNRDREISMSIGLGRSKLDSKGGVVGGNIDVNTLEMVSHISEHPNQQPSHKIQITMGSTEARLDYMGSSILMGIFSNADLQLQDEWKVNLCTAEASLSEKSEIFVHGDLQWDIFQVIISRSTTPDLIKIGMKLQEFFTQQFDTSKRALSTWGPVPYMPPKTPVINTDKASAELYMDAAHHRHWPNVLKMVAGCHISLFQMPLPEDAVQLGGSMSLHGNHMTLACFHGPNFRSKSWVLFHLEEPNIAFWTEAQKIWEDGCSDDSTYIVQTLDFHLGHNTMVTKPCGALESPMATITKVTRRRHENPPHGVATVKEWFNYVTAMRNEELNLLRNVDANNSESGAAAKSSSLLSGFRGSSSYNHETETIFALPKMQLQFKSIHVQDPEEPSLSDANSKPKVECSVVTEFTDHICVTMDAELIMFLHDLVSAYLKEKEKALFAPRMFASRPGQKSPTTQQDEPSSDKKEEREKEEGVNYTTVDWREFLCNTWHLEPTLRLISWTGRKIDPVGVDYILQKLGFHHARTTIPKWLQRGVMDPLDKVLSVLIKKLGTALQDEREKKGQRDKDEH</sequence>
<proteinExistence type="inferred from homology"/>
<protein>
    <recommendedName>
        <fullName>Bridge-like lipid transfer protein family member 1</fullName>
    </recommendedName>
</protein>
<keyword id="KW-1003">Cell membrane</keyword>
<keyword id="KW-0256">Endoplasmic reticulum</keyword>
<keyword id="KW-0472">Membrane</keyword>
<keyword id="KW-0496">Mitochondrion</keyword>
<keyword id="KW-1185">Reference proteome</keyword>
<keyword id="KW-0812">Transmembrane</keyword>
<keyword id="KW-1133">Transmembrane helix</keyword>
<comment type="function">
    <text evidence="2">Tube-forming lipid transport protein which provides phosphatidylethanolamine for glycosylphosphatidylinositol (GPI) anchor synthesis in the endoplasmic reticulum. Plays a role in endosomal trafficking and endosome recycling. Also involved in the actin cytoskeleton and cilia structural dynamics. Acts as a regulator of phagocytosis.</text>
</comment>
<comment type="subcellular location">
    <subcellularLocation>
        <location evidence="1">Cell membrane</location>
        <topology evidence="3">Single-pass membrane protein</topology>
    </subcellularLocation>
    <subcellularLocation>
        <location evidence="1">Endoplasmic reticulum membrane</location>
        <topology evidence="3">Single-pass membrane protein</topology>
    </subcellularLocation>
    <subcellularLocation>
        <location evidence="1">Mitochondrion membrane</location>
        <topology evidence="3">Single-pass membrane protein</topology>
    </subcellularLocation>
    <text evidence="1">Localizes to endoplasmic reticulum-cell membrane and some endoplasmic reticulum-mitochondria contact sites.</text>
</comment>
<comment type="disruption phenotype">
    <text evidence="5">Morpholino knockdown alters head development. Embryos are hydrocephalic, with abnormally curved notochord and overall body shape.</text>
</comment>
<reference key="1">
    <citation type="journal article" date="2013" name="Nature">
        <title>The zebrafish reference genome sequence and its relationship to the human genome.</title>
        <authorList>
            <person name="Howe K."/>
            <person name="Clark M.D."/>
            <person name="Torroja C.F."/>
            <person name="Torrance J."/>
            <person name="Berthelot C."/>
            <person name="Muffato M."/>
            <person name="Collins J.E."/>
            <person name="Humphray S."/>
            <person name="McLaren K."/>
            <person name="Matthews L."/>
            <person name="McLaren S."/>
            <person name="Sealy I."/>
            <person name="Caccamo M."/>
            <person name="Churcher C."/>
            <person name="Scott C."/>
            <person name="Barrett J.C."/>
            <person name="Koch R."/>
            <person name="Rauch G.J."/>
            <person name="White S."/>
            <person name="Chow W."/>
            <person name="Kilian B."/>
            <person name="Quintais L.T."/>
            <person name="Guerra-Assuncao J.A."/>
            <person name="Zhou Y."/>
            <person name="Gu Y."/>
            <person name="Yen J."/>
            <person name="Vogel J.H."/>
            <person name="Eyre T."/>
            <person name="Redmond S."/>
            <person name="Banerjee R."/>
            <person name="Chi J."/>
            <person name="Fu B."/>
            <person name="Langley E."/>
            <person name="Maguire S.F."/>
            <person name="Laird G.K."/>
            <person name="Lloyd D."/>
            <person name="Kenyon E."/>
            <person name="Donaldson S."/>
            <person name="Sehra H."/>
            <person name="Almeida-King J."/>
            <person name="Loveland J."/>
            <person name="Trevanion S."/>
            <person name="Jones M."/>
            <person name="Quail M."/>
            <person name="Willey D."/>
            <person name="Hunt A."/>
            <person name="Burton J."/>
            <person name="Sims S."/>
            <person name="McLay K."/>
            <person name="Plumb B."/>
            <person name="Davis J."/>
            <person name="Clee C."/>
            <person name="Oliver K."/>
            <person name="Clark R."/>
            <person name="Riddle C."/>
            <person name="Elliot D."/>
            <person name="Threadgold G."/>
            <person name="Harden G."/>
            <person name="Ware D."/>
            <person name="Begum S."/>
            <person name="Mortimore B."/>
            <person name="Kerry G."/>
            <person name="Heath P."/>
            <person name="Phillimore B."/>
            <person name="Tracey A."/>
            <person name="Corby N."/>
            <person name="Dunn M."/>
            <person name="Johnson C."/>
            <person name="Wood J."/>
            <person name="Clark S."/>
            <person name="Pelan S."/>
            <person name="Griffiths G."/>
            <person name="Smith M."/>
            <person name="Glithero R."/>
            <person name="Howden P."/>
            <person name="Barker N."/>
            <person name="Lloyd C."/>
            <person name="Stevens C."/>
            <person name="Harley J."/>
            <person name="Holt K."/>
            <person name="Panagiotidis G."/>
            <person name="Lovell J."/>
            <person name="Beasley H."/>
            <person name="Henderson C."/>
            <person name="Gordon D."/>
            <person name="Auger K."/>
            <person name="Wright D."/>
            <person name="Collins J."/>
            <person name="Raisen C."/>
            <person name="Dyer L."/>
            <person name="Leung K."/>
            <person name="Robertson L."/>
            <person name="Ambridge K."/>
            <person name="Leongamornlert D."/>
            <person name="McGuire S."/>
            <person name="Gilderthorp R."/>
            <person name="Griffiths C."/>
            <person name="Manthravadi D."/>
            <person name="Nichol S."/>
            <person name="Barker G."/>
            <person name="Whitehead S."/>
            <person name="Kay M."/>
            <person name="Brown J."/>
            <person name="Murnane C."/>
            <person name="Gray E."/>
            <person name="Humphries M."/>
            <person name="Sycamore N."/>
            <person name="Barker D."/>
            <person name="Saunders D."/>
            <person name="Wallis J."/>
            <person name="Babbage A."/>
            <person name="Hammond S."/>
            <person name="Mashreghi-Mohammadi M."/>
            <person name="Barr L."/>
            <person name="Martin S."/>
            <person name="Wray P."/>
            <person name="Ellington A."/>
            <person name="Matthews N."/>
            <person name="Ellwood M."/>
            <person name="Woodmansey R."/>
            <person name="Clark G."/>
            <person name="Cooper J."/>
            <person name="Tromans A."/>
            <person name="Grafham D."/>
            <person name="Skuce C."/>
            <person name="Pandian R."/>
            <person name="Andrews R."/>
            <person name="Harrison E."/>
            <person name="Kimberley A."/>
            <person name="Garnett J."/>
            <person name="Fosker N."/>
            <person name="Hall R."/>
            <person name="Garner P."/>
            <person name="Kelly D."/>
            <person name="Bird C."/>
            <person name="Palmer S."/>
            <person name="Gehring I."/>
            <person name="Berger A."/>
            <person name="Dooley C.M."/>
            <person name="Ersan-Urun Z."/>
            <person name="Eser C."/>
            <person name="Geiger H."/>
            <person name="Geisler M."/>
            <person name="Karotki L."/>
            <person name="Kirn A."/>
            <person name="Konantz J."/>
            <person name="Konantz M."/>
            <person name="Oberlander M."/>
            <person name="Rudolph-Geiger S."/>
            <person name="Teucke M."/>
            <person name="Lanz C."/>
            <person name="Raddatz G."/>
            <person name="Osoegawa K."/>
            <person name="Zhu B."/>
            <person name="Rapp A."/>
            <person name="Widaa S."/>
            <person name="Langford C."/>
            <person name="Yang F."/>
            <person name="Schuster S.C."/>
            <person name="Carter N.P."/>
            <person name="Harrow J."/>
            <person name="Ning Z."/>
            <person name="Herrero J."/>
            <person name="Searle S.M."/>
            <person name="Enright A."/>
            <person name="Geisler R."/>
            <person name="Plasterk R.H."/>
            <person name="Lee C."/>
            <person name="Westerfield M."/>
            <person name="de Jong P.J."/>
            <person name="Zon L.I."/>
            <person name="Postlethwait J.H."/>
            <person name="Nusslein-Volhard C."/>
            <person name="Hubbard T.J."/>
            <person name="Roest Crollius H."/>
            <person name="Rogers J."/>
            <person name="Stemple D.L."/>
        </authorList>
    </citation>
    <scope>NUCLEOTIDE SEQUENCE [LARGE SCALE GENOMIC DNA]</scope>
    <source>
        <strain>Tuebingen</strain>
    </source>
</reference>
<reference key="2">
    <citation type="journal article" date="2018" name="Am. J. Hum. Genet.">
        <title>KIAA1109 Variants Are Associated with a Severe Disorder of Brain Development and Arthrogryposis.</title>
        <authorList>
            <consortium name="DDD Study"/>
            <person name="Gueneau L."/>
            <person name="Fish R.J."/>
            <person name="Shamseldin H.E."/>
            <person name="Voisin N."/>
            <person name="Tran Mau-Them F."/>
            <person name="Preiksaitiene E."/>
            <person name="Monroe G.R."/>
            <person name="Lai A."/>
            <person name="Putoux A."/>
            <person name="Allias F."/>
            <person name="Ambusaidi Q."/>
            <person name="Ambrozaityte L."/>
            <person name="Cimbalistiene L."/>
            <person name="Delafontaine J."/>
            <person name="Guex N."/>
            <person name="Hashem M."/>
            <person name="Kurdi W."/>
            <person name="Jamuar S.S."/>
            <person name="Ying L.J."/>
            <person name="Bonnard C."/>
            <person name="Pippucci T."/>
            <person name="Pradervand S."/>
            <person name="Roechert B."/>
            <person name="van Hasselt P.M."/>
            <person name="Wiederkehr M."/>
            <person name="Wright C.F."/>
            <person name="Xenarios I."/>
            <person name="van Haaften G."/>
            <person name="Shaw-Smith C."/>
            <person name="Schindewolf E.M."/>
            <person name="Neerman-Arbez M."/>
            <person name="Sanlaville D."/>
            <person name="Lesca G."/>
            <person name="Guibaud L."/>
            <person name="Reversade B."/>
            <person name="Chelly J."/>
            <person name="Kucinskas V."/>
            <person name="Alkuraya F.S."/>
            <person name="Reymond A."/>
        </authorList>
    </citation>
    <scope>DISRUPTION PHENOTYPE</scope>
</reference>
<evidence type="ECO:0000250" key="1">
    <source>
        <dbReference type="UniProtKB" id="Q12150"/>
    </source>
</evidence>
<evidence type="ECO:0000250" key="2">
    <source>
        <dbReference type="UniProtKB" id="Q2LD37"/>
    </source>
</evidence>
<evidence type="ECO:0000255" key="3"/>
<evidence type="ECO:0000256" key="4">
    <source>
        <dbReference type="SAM" id="MobiDB-lite"/>
    </source>
</evidence>
<evidence type="ECO:0000269" key="5">
    <source>
    </source>
</evidence>